<feature type="initiator methionine" description="Removed" evidence="2">
    <location>
        <position position="1"/>
    </location>
</feature>
<feature type="chain" id="PRO_0000313674" description="Inactive hydroxysteroid dehydrogenase-like protein 1">
    <location>
        <begin position="2"/>
        <end position="330"/>
    </location>
</feature>
<feature type="region of interest" description="Required for mitochondria translocation" evidence="1">
    <location>
        <begin position="2"/>
        <end position="82"/>
    </location>
</feature>
<feature type="binding site" evidence="1">
    <location>
        <begin position="74"/>
        <end position="80"/>
    </location>
    <ligand>
        <name>NADP(+)</name>
        <dbReference type="ChEBI" id="CHEBI:58349"/>
    </ligand>
</feature>
<feature type="binding site" evidence="1">
    <location>
        <position position="125"/>
    </location>
    <ligand>
        <name>NADP(+)</name>
        <dbReference type="ChEBI" id="CHEBI:58349"/>
    </ligand>
</feature>
<feature type="binding site" evidence="1">
    <location>
        <position position="222"/>
    </location>
    <ligand>
        <name>NADP(+)</name>
        <dbReference type="ChEBI" id="CHEBI:58349"/>
    </ligand>
</feature>
<feature type="modified residue" description="N-acetylalanine" evidence="2">
    <location>
        <position position="2"/>
    </location>
</feature>
<protein>
    <recommendedName>
        <fullName>Inactive hydroxysteroid dehydrogenase-like protein 1</fullName>
    </recommendedName>
</protein>
<gene>
    <name type="primary">Hsdl1</name>
</gene>
<sequence length="330" mass="36908">MAAVDSFYLLYREIARSCSCYVEALALVGAWYTARKSIPVICDFYSLVRLHFIPRLGSRPDLIKQYGRWAVISGATDGIGKAYAEELASHGLNIILISQEEEKLQAVAKHIADTYRVETLVLVADFSRGREIYAPIREALRDRDIGILVNDVGAFYPYPQYFSQVPEDTIWDIVNVNIAAASLMVHIVLPGMVERKKGAIVTVSSGSCCKPTPQLAAFSASKAYLDHFSRALQYEYASKGIFVQSLIPFYVTSSVTAPGSFLRRCPWLAPSPRVYAQHAVSTLGISKRTTGYWSHSIQFLFAQYMPEWLWVWGANLLNRSLRKEALSSQA</sequence>
<keyword id="KW-0007">Acetylation</keyword>
<keyword id="KW-0496">Mitochondrion</keyword>
<keyword id="KW-0521">NADP</keyword>
<keyword id="KW-1185">Reference proteome</keyword>
<dbReference type="EMBL" id="BC097457">
    <property type="protein sequence ID" value="AAH97457.1"/>
    <property type="molecule type" value="mRNA"/>
</dbReference>
<dbReference type="RefSeq" id="NP_001020067.1">
    <property type="nucleotide sequence ID" value="NM_001024896.1"/>
</dbReference>
<dbReference type="RefSeq" id="XP_006255775.1">
    <property type="nucleotide sequence ID" value="XM_006255713.5"/>
</dbReference>
<dbReference type="RefSeq" id="XP_006255776.1">
    <property type="nucleotide sequence ID" value="XM_006255714.3"/>
</dbReference>
<dbReference type="RefSeq" id="XP_038953799.1">
    <property type="nucleotide sequence ID" value="XM_039097871.2"/>
</dbReference>
<dbReference type="SMR" id="Q4V8B7"/>
<dbReference type="FunCoup" id="Q4V8B7">
    <property type="interactions" value="1904"/>
</dbReference>
<dbReference type="IntAct" id="Q4V8B7">
    <property type="interactions" value="1"/>
</dbReference>
<dbReference type="STRING" id="10116.ENSRNOP00000020860"/>
<dbReference type="PhosphoSitePlus" id="Q4V8B7"/>
<dbReference type="SwissPalm" id="Q4V8B7"/>
<dbReference type="jPOST" id="Q4V8B7"/>
<dbReference type="PaxDb" id="10116-ENSRNOP00000020860"/>
<dbReference type="Ensembl" id="ENSRNOT00000114729.1">
    <property type="protein sequence ID" value="ENSRNOP00000088924.1"/>
    <property type="gene ID" value="ENSRNOG00000015576.6"/>
</dbReference>
<dbReference type="GeneID" id="361418"/>
<dbReference type="KEGG" id="rno:361418"/>
<dbReference type="UCSC" id="RGD:1308433">
    <property type="organism name" value="rat"/>
</dbReference>
<dbReference type="AGR" id="RGD:1308433"/>
<dbReference type="CTD" id="83693"/>
<dbReference type="RGD" id="1308433">
    <property type="gene designation" value="Hsdl1"/>
</dbReference>
<dbReference type="eggNOG" id="KOG1014">
    <property type="taxonomic scope" value="Eukaryota"/>
</dbReference>
<dbReference type="GeneTree" id="ENSGT00940000160053"/>
<dbReference type="HOGENOM" id="CLU_010194_38_0_1"/>
<dbReference type="InParanoid" id="Q4V8B7"/>
<dbReference type="OMA" id="QYGLMKC"/>
<dbReference type="PhylomeDB" id="Q4V8B7"/>
<dbReference type="TreeFam" id="TF314591"/>
<dbReference type="PRO" id="PR:Q4V8B7"/>
<dbReference type="Proteomes" id="UP000002494">
    <property type="component" value="Chromosome 19"/>
</dbReference>
<dbReference type="Bgee" id="ENSRNOG00000015576">
    <property type="expression patterns" value="Expressed in skeletal muscle tissue and 18 other cell types or tissues"/>
</dbReference>
<dbReference type="GO" id="GO:0045111">
    <property type="term" value="C:intermediate filament cytoskeleton"/>
    <property type="evidence" value="ECO:0007669"/>
    <property type="project" value="Ensembl"/>
</dbReference>
<dbReference type="GO" id="GO:0005739">
    <property type="term" value="C:mitochondrion"/>
    <property type="evidence" value="ECO:0000250"/>
    <property type="project" value="UniProtKB"/>
</dbReference>
<dbReference type="CDD" id="cd05356">
    <property type="entry name" value="17beta-HSD1_like_SDR_c"/>
    <property type="match status" value="1"/>
</dbReference>
<dbReference type="FunFam" id="3.40.50.720:FF:000137">
    <property type="entry name" value="Hydroxysteroid (17-beta) dehydrogenase 3"/>
    <property type="match status" value="1"/>
</dbReference>
<dbReference type="Gene3D" id="3.40.50.720">
    <property type="entry name" value="NAD(P)-binding Rossmann-like Domain"/>
    <property type="match status" value="1"/>
</dbReference>
<dbReference type="InterPro" id="IPR052149">
    <property type="entry name" value="17-beta-HSD3-like"/>
</dbReference>
<dbReference type="InterPro" id="IPR036291">
    <property type="entry name" value="NAD(P)-bd_dom_sf"/>
</dbReference>
<dbReference type="InterPro" id="IPR002347">
    <property type="entry name" value="SDR_fam"/>
</dbReference>
<dbReference type="PANTHER" id="PTHR44889">
    <property type="entry name" value="INACTIVE HYDROXYSTEROID DEHYDROGENASE-LIKE PROTEIN 1"/>
    <property type="match status" value="1"/>
</dbReference>
<dbReference type="PANTHER" id="PTHR44889:SF1">
    <property type="entry name" value="INACTIVE HYDROXYSTEROID DEHYDROGENASE-LIKE PROTEIN 1"/>
    <property type="match status" value="1"/>
</dbReference>
<dbReference type="Pfam" id="PF00106">
    <property type="entry name" value="adh_short"/>
    <property type="match status" value="1"/>
</dbReference>
<dbReference type="PIRSF" id="PIRSF000126">
    <property type="entry name" value="11-beta-HSD1"/>
    <property type="match status" value="1"/>
</dbReference>
<dbReference type="PRINTS" id="PR00081">
    <property type="entry name" value="GDHRDH"/>
</dbReference>
<dbReference type="SUPFAM" id="SSF51735">
    <property type="entry name" value="NAD(P)-binding Rossmann-fold domains"/>
    <property type="match status" value="1"/>
</dbReference>
<comment type="subunit">
    <text evidence="1">Interacts with STYXL1.</text>
</comment>
<comment type="subcellular location">
    <subcellularLocation>
        <location evidence="1">Mitochondrion</location>
    </subcellularLocation>
</comment>
<comment type="similarity">
    <text evidence="3">Belongs to the short-chain dehydrogenases/reductases (SDR) family. 17-beta-HSD 3 subfamily.</text>
</comment>
<comment type="caution">
    <text evidence="3">Although it belongs to the SDR family, Phe-218 is present instead of the conserved Tyr which is an active site residue. It is therefore expected that this protein lacks oxidoreductase activity.</text>
</comment>
<organism>
    <name type="scientific">Rattus norvegicus</name>
    <name type="common">Rat</name>
    <dbReference type="NCBI Taxonomy" id="10116"/>
    <lineage>
        <taxon>Eukaryota</taxon>
        <taxon>Metazoa</taxon>
        <taxon>Chordata</taxon>
        <taxon>Craniata</taxon>
        <taxon>Vertebrata</taxon>
        <taxon>Euteleostomi</taxon>
        <taxon>Mammalia</taxon>
        <taxon>Eutheria</taxon>
        <taxon>Euarchontoglires</taxon>
        <taxon>Glires</taxon>
        <taxon>Rodentia</taxon>
        <taxon>Myomorpha</taxon>
        <taxon>Muroidea</taxon>
        <taxon>Muridae</taxon>
        <taxon>Murinae</taxon>
        <taxon>Rattus</taxon>
    </lineage>
</organism>
<accession>Q4V8B7</accession>
<proteinExistence type="evidence at transcript level"/>
<reference key="1">
    <citation type="journal article" date="2004" name="Genome Res.">
        <title>The status, quality, and expansion of the NIH full-length cDNA project: the Mammalian Gene Collection (MGC).</title>
        <authorList>
            <consortium name="The MGC Project Team"/>
        </authorList>
    </citation>
    <scope>NUCLEOTIDE SEQUENCE [LARGE SCALE MRNA]</scope>
    <source>
        <tissue>Testis</tissue>
    </source>
</reference>
<evidence type="ECO:0000250" key="1"/>
<evidence type="ECO:0000250" key="2">
    <source>
        <dbReference type="UniProtKB" id="Q3SXM5"/>
    </source>
</evidence>
<evidence type="ECO:0000305" key="3"/>
<name>HSDL1_RAT</name>